<proteinExistence type="predicted"/>
<reference key="1">
    <citation type="journal article" date="2002" name="J. Bacteriol.">
        <title>Whole-genome comparison of Mycobacterium tuberculosis clinical and laboratory strains.</title>
        <authorList>
            <person name="Fleischmann R.D."/>
            <person name="Alland D."/>
            <person name="Eisen J.A."/>
            <person name="Carpenter L."/>
            <person name="White O."/>
            <person name="Peterson J.D."/>
            <person name="DeBoy R.T."/>
            <person name="Dodson R.J."/>
            <person name="Gwinn M.L."/>
            <person name="Haft D.H."/>
            <person name="Hickey E.K."/>
            <person name="Kolonay J.F."/>
            <person name="Nelson W.C."/>
            <person name="Umayam L.A."/>
            <person name="Ermolaeva M.D."/>
            <person name="Salzberg S.L."/>
            <person name="Delcher A."/>
            <person name="Utterback T.R."/>
            <person name="Weidman J.F."/>
            <person name="Khouri H.M."/>
            <person name="Gill J."/>
            <person name="Mikula A."/>
            <person name="Bishai W."/>
            <person name="Jacobs W.R. Jr."/>
            <person name="Venter J.C."/>
            <person name="Fraser C.M."/>
        </authorList>
    </citation>
    <scope>NUCLEOTIDE SEQUENCE [LARGE SCALE GENOMIC DNA]</scope>
    <source>
        <strain>CDC 1551 / Oshkosh</strain>
    </source>
</reference>
<evidence type="ECO:0000255" key="1"/>
<evidence type="ECO:0000305" key="2"/>
<protein>
    <recommendedName>
        <fullName>Uncharacterized protein MT0989</fullName>
    </recommendedName>
</protein>
<keyword id="KW-1003">Cell membrane</keyword>
<keyword id="KW-0472">Membrane</keyword>
<keyword id="KW-1185">Reference proteome</keyword>
<keyword id="KW-0812">Transmembrane</keyword>
<keyword id="KW-1133">Transmembrane helix</keyword>
<sequence length="115" mass="12415">MRVPSQWMISSRVTVAWNIVGYLVYAALAFVGGFAVWFSLFFAMATDGCHDSACDASYHVFPAMVTMWIGVGAVLLLTLVVMVRNSSRGNVVIGWPFVGLLALGLVYVAADAVLH</sequence>
<feature type="chain" id="PRO_0000427626" description="Uncharacterized protein MT0989">
    <location>
        <begin position="1"/>
        <end position="115"/>
    </location>
</feature>
<feature type="transmembrane region" description="Helical" evidence="1">
    <location>
        <begin position="23"/>
        <end position="43"/>
    </location>
</feature>
<feature type="transmembrane region" description="Helical" evidence="1">
    <location>
        <begin position="63"/>
        <end position="83"/>
    </location>
</feature>
<feature type="transmembrane region" description="Helical" evidence="1">
    <location>
        <begin position="90"/>
        <end position="110"/>
    </location>
</feature>
<dbReference type="EMBL" id="AE000516">
    <property type="protein sequence ID" value="AAK45237.1"/>
    <property type="molecule type" value="Genomic_DNA"/>
</dbReference>
<dbReference type="PIR" id="G70717">
    <property type="entry name" value="G70717"/>
</dbReference>
<dbReference type="RefSeq" id="WP_003404907.1">
    <property type="nucleotide sequence ID" value="NZ_KK341227.1"/>
</dbReference>
<dbReference type="KEGG" id="mtc:MT0989"/>
<dbReference type="PATRIC" id="fig|83331.31.peg.1061"/>
<dbReference type="HOGENOM" id="CLU_179990_0_0_11"/>
<dbReference type="Proteomes" id="UP000001020">
    <property type="component" value="Chromosome"/>
</dbReference>
<dbReference type="GO" id="GO:0005886">
    <property type="term" value="C:plasma membrane"/>
    <property type="evidence" value="ECO:0007669"/>
    <property type="project" value="UniProtKB-SubCell"/>
</dbReference>
<name>Y961_MYCTO</name>
<gene>
    <name type="ordered locus">MT0989</name>
</gene>
<organism>
    <name type="scientific">Mycobacterium tuberculosis (strain CDC 1551 / Oshkosh)</name>
    <dbReference type="NCBI Taxonomy" id="83331"/>
    <lineage>
        <taxon>Bacteria</taxon>
        <taxon>Bacillati</taxon>
        <taxon>Actinomycetota</taxon>
        <taxon>Actinomycetes</taxon>
        <taxon>Mycobacteriales</taxon>
        <taxon>Mycobacteriaceae</taxon>
        <taxon>Mycobacterium</taxon>
        <taxon>Mycobacterium tuberculosis complex</taxon>
    </lineage>
</organism>
<comment type="subcellular location">
    <subcellularLocation>
        <location evidence="2">Cell membrane</location>
        <topology evidence="2">Multi-pass membrane protein</topology>
    </subcellularLocation>
</comment>
<accession>P9WKM8</accession>
<accession>L0T5A9</accession>
<accession>P64775</accession>
<accession>P71549</accession>